<accession>P28411</accession>
<protein>
    <recommendedName>
        <fullName evidence="1">Ribulose bisphosphate carboxylase large chain</fullName>
        <shortName evidence="1">RuBisCO large subunit</shortName>
        <ecNumber evidence="1">4.1.1.39</ecNumber>
    </recommendedName>
</protein>
<reference key="1">
    <citation type="journal article" date="1992" name="Science">
        <title>Carnivorous plants: phylogeny and structural evolution.</title>
        <authorList>
            <person name="Albert V.A."/>
            <person name="Williams S.E."/>
            <person name="Chase M.W."/>
        </authorList>
    </citation>
    <scope>NUCLEOTIDE SEQUENCE [GENOMIC DNA]</scope>
</reference>
<organism>
    <name type="scientific">Drosera regia</name>
    <name type="common">King sundew</name>
    <dbReference type="NCBI Taxonomy" id="4371"/>
    <lineage>
        <taxon>Eukaryota</taxon>
        <taxon>Viridiplantae</taxon>
        <taxon>Streptophyta</taxon>
        <taxon>Embryophyta</taxon>
        <taxon>Tracheophyta</taxon>
        <taxon>Spermatophyta</taxon>
        <taxon>Magnoliopsida</taxon>
        <taxon>eudicotyledons</taxon>
        <taxon>Gunneridae</taxon>
        <taxon>Pentapetalae</taxon>
        <taxon>Caryophyllales</taxon>
        <taxon>Droseraceae</taxon>
        <taxon>Drosera</taxon>
    </lineage>
</organism>
<geneLocation type="chloroplast"/>
<sequence>NVGFKAGVKEYKLTYYTPDYETLDTDILAAFRVTPQPGVPPEEAGAAVAAESSTGTWTTVWTDGLTNLDRYKGRCYHIEPVAGEENQYIVYVAYPLDLFEEGSVTNMFTSIVGNVFGFKALRVLRLEDLRIPPAYVKTFQGPPHGIQVERDKLNKYGRPLLGCTIKPKLGLSAKNYGRAVYECLRGGLDFTKDDENVNSQPFMRWRDRFVFCVEAIYKAQAETGEIKGHYLNATAGTSEEMIKRAVFARELGVPIVMHDYLTGGFTANTSLSHYCRDNGLLLHIHRAMHAVIDRQKNHGIHFRVLAKALRMSGGDHIHSGTVVGKLEGERDITLGFVVLLRDDYIEKDRSRGIYFTQPWVSLPGVLPVASGGIHVWHMPALTEIFGDDSVLQFGGGTLGHPWGNAPGAVANRVALEACVQARNEGRDLAREGNEIIRKASKWSPELAAACEVWKEIKFEFQAMDTL</sequence>
<name>RBL_DRORE</name>
<gene>
    <name evidence="1" type="primary">rbcL</name>
</gene>
<feature type="chain" id="PRO_0000062454" description="Ribulose bisphosphate carboxylase large chain">
    <location>
        <begin position="1" status="less than"/>
        <end position="466"/>
    </location>
</feature>
<feature type="active site" description="Proton acceptor" evidence="1">
    <location>
        <position position="166"/>
    </location>
</feature>
<feature type="active site" description="Proton acceptor" evidence="1">
    <location>
        <position position="285"/>
    </location>
</feature>
<feature type="binding site" description="in homodimeric partner" evidence="1">
    <location>
        <position position="114"/>
    </location>
    <ligand>
        <name>substrate</name>
    </ligand>
</feature>
<feature type="binding site" evidence="1">
    <location>
        <position position="164"/>
    </location>
    <ligand>
        <name>substrate</name>
    </ligand>
</feature>
<feature type="binding site" evidence="1">
    <location>
        <position position="168"/>
    </location>
    <ligand>
        <name>substrate</name>
    </ligand>
</feature>
<feature type="binding site" description="via carbamate group" evidence="1">
    <location>
        <position position="192"/>
    </location>
    <ligand>
        <name>Mg(2+)</name>
        <dbReference type="ChEBI" id="CHEBI:18420"/>
    </ligand>
</feature>
<feature type="binding site" evidence="1">
    <location>
        <position position="194"/>
    </location>
    <ligand>
        <name>Mg(2+)</name>
        <dbReference type="ChEBI" id="CHEBI:18420"/>
    </ligand>
</feature>
<feature type="binding site" evidence="1">
    <location>
        <position position="195"/>
    </location>
    <ligand>
        <name>Mg(2+)</name>
        <dbReference type="ChEBI" id="CHEBI:18420"/>
    </ligand>
</feature>
<feature type="binding site" evidence="1">
    <location>
        <position position="286"/>
    </location>
    <ligand>
        <name>substrate</name>
    </ligand>
</feature>
<feature type="binding site" evidence="1">
    <location>
        <position position="318"/>
    </location>
    <ligand>
        <name>substrate</name>
    </ligand>
</feature>
<feature type="binding site" evidence="1">
    <location>
        <position position="370"/>
    </location>
    <ligand>
        <name>substrate</name>
    </ligand>
</feature>
<feature type="site" description="Transition state stabilizer" evidence="1">
    <location>
        <position position="325"/>
    </location>
</feature>
<feature type="modified residue" description="N6,N6,N6-trimethyllysine" evidence="1">
    <location>
        <position position="5"/>
    </location>
</feature>
<feature type="modified residue" description="N6-carboxylysine" evidence="1">
    <location>
        <position position="192"/>
    </location>
</feature>
<feature type="non-terminal residue">
    <location>
        <position position="1"/>
    </location>
</feature>
<proteinExistence type="inferred from homology"/>
<comment type="function">
    <text evidence="1">RuBisCO catalyzes two reactions: the carboxylation of D-ribulose 1,5-bisphosphate, the primary event in carbon dioxide fixation, as well as the oxidative fragmentation of the pentose substrate in the photorespiration process. Both reactions occur simultaneously and in competition at the same active site.</text>
</comment>
<comment type="catalytic activity">
    <reaction evidence="1">
        <text>2 (2R)-3-phosphoglycerate + 2 H(+) = D-ribulose 1,5-bisphosphate + CO2 + H2O</text>
        <dbReference type="Rhea" id="RHEA:23124"/>
        <dbReference type="ChEBI" id="CHEBI:15377"/>
        <dbReference type="ChEBI" id="CHEBI:15378"/>
        <dbReference type="ChEBI" id="CHEBI:16526"/>
        <dbReference type="ChEBI" id="CHEBI:57870"/>
        <dbReference type="ChEBI" id="CHEBI:58272"/>
        <dbReference type="EC" id="4.1.1.39"/>
    </reaction>
</comment>
<comment type="catalytic activity">
    <reaction evidence="1">
        <text>D-ribulose 1,5-bisphosphate + O2 = 2-phosphoglycolate + (2R)-3-phosphoglycerate + 2 H(+)</text>
        <dbReference type="Rhea" id="RHEA:36631"/>
        <dbReference type="ChEBI" id="CHEBI:15378"/>
        <dbReference type="ChEBI" id="CHEBI:15379"/>
        <dbReference type="ChEBI" id="CHEBI:57870"/>
        <dbReference type="ChEBI" id="CHEBI:58033"/>
        <dbReference type="ChEBI" id="CHEBI:58272"/>
    </reaction>
</comment>
<comment type="cofactor">
    <cofactor evidence="1">
        <name>Mg(2+)</name>
        <dbReference type="ChEBI" id="CHEBI:18420"/>
    </cofactor>
    <text evidence="1">Binds 1 Mg(2+) ion per subunit.</text>
</comment>
<comment type="subunit">
    <text evidence="1">Heterohexadecamer of 8 large chains and 8 small chains.</text>
</comment>
<comment type="subcellular location">
    <subcellularLocation>
        <location>Plastid</location>
        <location>Chloroplast</location>
    </subcellularLocation>
</comment>
<comment type="miscellaneous">
    <text evidence="1">The basic functional RuBisCO is composed of a large chain homodimer in a 'head-to-tail' conformation. In form I RuBisCO this homodimer is arranged in a barrel-like tetramer with the small subunits forming a tetrameric 'cap' on each end of the 'barrel'.</text>
</comment>
<comment type="similarity">
    <text evidence="1">Belongs to the RuBisCO large chain family. Type I subfamily.</text>
</comment>
<keyword id="KW-0113">Calvin cycle</keyword>
<keyword id="KW-0120">Carbon dioxide fixation</keyword>
<keyword id="KW-0150">Chloroplast</keyword>
<keyword id="KW-0456">Lyase</keyword>
<keyword id="KW-0460">Magnesium</keyword>
<keyword id="KW-0479">Metal-binding</keyword>
<keyword id="KW-0488">Methylation</keyword>
<keyword id="KW-0503">Monooxygenase</keyword>
<keyword id="KW-0560">Oxidoreductase</keyword>
<keyword id="KW-0601">Photorespiration</keyword>
<keyword id="KW-0602">Photosynthesis</keyword>
<keyword id="KW-0934">Plastid</keyword>
<dbReference type="EC" id="4.1.1.39" evidence="1"/>
<dbReference type="EMBL" id="L01914">
    <property type="protein sequence ID" value="AAA03348.2"/>
    <property type="molecule type" value="Genomic_DNA"/>
</dbReference>
<dbReference type="SMR" id="P28411"/>
<dbReference type="GO" id="GO:0009507">
    <property type="term" value="C:chloroplast"/>
    <property type="evidence" value="ECO:0007669"/>
    <property type="project" value="UniProtKB-SubCell"/>
</dbReference>
<dbReference type="GO" id="GO:0000287">
    <property type="term" value="F:magnesium ion binding"/>
    <property type="evidence" value="ECO:0007669"/>
    <property type="project" value="InterPro"/>
</dbReference>
<dbReference type="GO" id="GO:0004497">
    <property type="term" value="F:monooxygenase activity"/>
    <property type="evidence" value="ECO:0007669"/>
    <property type="project" value="UniProtKB-KW"/>
</dbReference>
<dbReference type="GO" id="GO:0016984">
    <property type="term" value="F:ribulose-bisphosphate carboxylase activity"/>
    <property type="evidence" value="ECO:0007669"/>
    <property type="project" value="UniProtKB-EC"/>
</dbReference>
<dbReference type="GO" id="GO:0009853">
    <property type="term" value="P:photorespiration"/>
    <property type="evidence" value="ECO:0007669"/>
    <property type="project" value="UniProtKB-KW"/>
</dbReference>
<dbReference type="GO" id="GO:0019253">
    <property type="term" value="P:reductive pentose-phosphate cycle"/>
    <property type="evidence" value="ECO:0007669"/>
    <property type="project" value="UniProtKB-KW"/>
</dbReference>
<dbReference type="CDD" id="cd08212">
    <property type="entry name" value="RuBisCO_large_I"/>
    <property type="match status" value="1"/>
</dbReference>
<dbReference type="FunFam" id="3.20.20.110:FF:000001">
    <property type="entry name" value="Ribulose bisphosphate carboxylase large chain"/>
    <property type="match status" value="1"/>
</dbReference>
<dbReference type="FunFam" id="3.30.70.150:FF:000001">
    <property type="entry name" value="Ribulose bisphosphate carboxylase large chain"/>
    <property type="match status" value="1"/>
</dbReference>
<dbReference type="Gene3D" id="3.20.20.110">
    <property type="entry name" value="Ribulose bisphosphate carboxylase, large subunit, C-terminal domain"/>
    <property type="match status" value="1"/>
</dbReference>
<dbReference type="Gene3D" id="3.30.70.150">
    <property type="entry name" value="RuBisCO large subunit, N-terminal domain"/>
    <property type="match status" value="1"/>
</dbReference>
<dbReference type="HAMAP" id="MF_01338">
    <property type="entry name" value="RuBisCO_L_type1"/>
    <property type="match status" value="1"/>
</dbReference>
<dbReference type="InterPro" id="IPR033966">
    <property type="entry name" value="RuBisCO"/>
</dbReference>
<dbReference type="InterPro" id="IPR020878">
    <property type="entry name" value="RuBisCo_large_chain_AS"/>
</dbReference>
<dbReference type="InterPro" id="IPR000685">
    <property type="entry name" value="RuBisCO_lsu_C"/>
</dbReference>
<dbReference type="InterPro" id="IPR036376">
    <property type="entry name" value="RuBisCO_lsu_C_sf"/>
</dbReference>
<dbReference type="InterPro" id="IPR017443">
    <property type="entry name" value="RuBisCO_lsu_fd_N"/>
</dbReference>
<dbReference type="InterPro" id="IPR036422">
    <property type="entry name" value="RuBisCO_lsu_N_sf"/>
</dbReference>
<dbReference type="InterPro" id="IPR020888">
    <property type="entry name" value="RuBisCO_lsuI"/>
</dbReference>
<dbReference type="NCBIfam" id="NF003252">
    <property type="entry name" value="PRK04208.1"/>
    <property type="match status" value="1"/>
</dbReference>
<dbReference type="PANTHER" id="PTHR42704">
    <property type="entry name" value="RIBULOSE BISPHOSPHATE CARBOXYLASE"/>
    <property type="match status" value="1"/>
</dbReference>
<dbReference type="PANTHER" id="PTHR42704:SF15">
    <property type="entry name" value="RIBULOSE BISPHOSPHATE CARBOXYLASE LARGE CHAIN"/>
    <property type="match status" value="1"/>
</dbReference>
<dbReference type="Pfam" id="PF00016">
    <property type="entry name" value="RuBisCO_large"/>
    <property type="match status" value="1"/>
</dbReference>
<dbReference type="Pfam" id="PF02788">
    <property type="entry name" value="RuBisCO_large_N"/>
    <property type="match status" value="1"/>
</dbReference>
<dbReference type="SFLD" id="SFLDG01052">
    <property type="entry name" value="RuBisCO"/>
    <property type="match status" value="1"/>
</dbReference>
<dbReference type="SFLD" id="SFLDS00014">
    <property type="entry name" value="RuBisCO"/>
    <property type="match status" value="1"/>
</dbReference>
<dbReference type="SFLD" id="SFLDG00301">
    <property type="entry name" value="RuBisCO-like_proteins"/>
    <property type="match status" value="1"/>
</dbReference>
<dbReference type="SUPFAM" id="SSF51649">
    <property type="entry name" value="RuBisCo, C-terminal domain"/>
    <property type="match status" value="1"/>
</dbReference>
<dbReference type="SUPFAM" id="SSF54966">
    <property type="entry name" value="RuBisCO, large subunit, small (N-terminal) domain"/>
    <property type="match status" value="1"/>
</dbReference>
<dbReference type="PROSITE" id="PS00157">
    <property type="entry name" value="RUBISCO_LARGE"/>
    <property type="match status" value="1"/>
</dbReference>
<evidence type="ECO:0000255" key="1">
    <source>
        <dbReference type="HAMAP-Rule" id="MF_01338"/>
    </source>
</evidence>